<comment type="function">
    <text evidence="1">Catalyzes the NAD(P)-dependent oxidation of 4-(phosphooxy)-L-threonine (HTP) into 2-amino-3-oxo-4-(phosphooxy)butyric acid which spontaneously decarboxylates to form 3-amino-2-oxopropyl phosphate (AHAP).</text>
</comment>
<comment type="catalytic activity">
    <reaction evidence="1">
        <text>4-(phosphooxy)-L-threonine + NAD(+) = 3-amino-2-oxopropyl phosphate + CO2 + NADH</text>
        <dbReference type="Rhea" id="RHEA:32275"/>
        <dbReference type="ChEBI" id="CHEBI:16526"/>
        <dbReference type="ChEBI" id="CHEBI:57279"/>
        <dbReference type="ChEBI" id="CHEBI:57540"/>
        <dbReference type="ChEBI" id="CHEBI:57945"/>
        <dbReference type="ChEBI" id="CHEBI:58452"/>
        <dbReference type="EC" id="1.1.1.262"/>
    </reaction>
</comment>
<comment type="cofactor">
    <cofactor evidence="1">
        <name>Zn(2+)</name>
        <dbReference type="ChEBI" id="CHEBI:29105"/>
    </cofactor>
    <cofactor evidence="1">
        <name>Mg(2+)</name>
        <dbReference type="ChEBI" id="CHEBI:18420"/>
    </cofactor>
    <cofactor evidence="1">
        <name>Co(2+)</name>
        <dbReference type="ChEBI" id="CHEBI:48828"/>
    </cofactor>
    <text evidence="1">Binds 1 divalent metal cation per subunit. Can use ions such as Zn(2+), Mg(2+) or Co(2+).</text>
</comment>
<comment type="pathway">
    <text evidence="1">Cofactor biosynthesis; pyridoxine 5'-phosphate biosynthesis; pyridoxine 5'-phosphate from D-erythrose 4-phosphate: step 4/5.</text>
</comment>
<comment type="subunit">
    <text evidence="1">Homodimer.</text>
</comment>
<comment type="subcellular location">
    <subcellularLocation>
        <location evidence="1">Cytoplasm</location>
    </subcellularLocation>
</comment>
<comment type="miscellaneous">
    <text evidence="1">The active site is located at the dimer interface.</text>
</comment>
<comment type="similarity">
    <text evidence="1">Belongs to the PdxA family.</text>
</comment>
<organism>
    <name type="scientific">Escherichia coli O8 (strain IAI1)</name>
    <dbReference type="NCBI Taxonomy" id="585034"/>
    <lineage>
        <taxon>Bacteria</taxon>
        <taxon>Pseudomonadati</taxon>
        <taxon>Pseudomonadota</taxon>
        <taxon>Gammaproteobacteria</taxon>
        <taxon>Enterobacterales</taxon>
        <taxon>Enterobacteriaceae</taxon>
        <taxon>Escherichia</taxon>
    </lineage>
</organism>
<reference key="1">
    <citation type="journal article" date="2009" name="PLoS Genet.">
        <title>Organised genome dynamics in the Escherichia coli species results in highly diverse adaptive paths.</title>
        <authorList>
            <person name="Touchon M."/>
            <person name="Hoede C."/>
            <person name="Tenaillon O."/>
            <person name="Barbe V."/>
            <person name="Baeriswyl S."/>
            <person name="Bidet P."/>
            <person name="Bingen E."/>
            <person name="Bonacorsi S."/>
            <person name="Bouchier C."/>
            <person name="Bouvet O."/>
            <person name="Calteau A."/>
            <person name="Chiapello H."/>
            <person name="Clermont O."/>
            <person name="Cruveiller S."/>
            <person name="Danchin A."/>
            <person name="Diard M."/>
            <person name="Dossat C."/>
            <person name="Karoui M.E."/>
            <person name="Frapy E."/>
            <person name="Garry L."/>
            <person name="Ghigo J.M."/>
            <person name="Gilles A.M."/>
            <person name="Johnson J."/>
            <person name="Le Bouguenec C."/>
            <person name="Lescat M."/>
            <person name="Mangenot S."/>
            <person name="Martinez-Jehanne V."/>
            <person name="Matic I."/>
            <person name="Nassif X."/>
            <person name="Oztas S."/>
            <person name="Petit M.A."/>
            <person name="Pichon C."/>
            <person name="Rouy Z."/>
            <person name="Ruf C.S."/>
            <person name="Schneider D."/>
            <person name="Tourret J."/>
            <person name="Vacherie B."/>
            <person name="Vallenet D."/>
            <person name="Medigue C."/>
            <person name="Rocha E.P.C."/>
            <person name="Denamur E."/>
        </authorList>
    </citation>
    <scope>NUCLEOTIDE SEQUENCE [LARGE SCALE GENOMIC DNA]</scope>
    <source>
        <strain>IAI1</strain>
    </source>
</reference>
<sequence length="329" mass="35209">MVKTQRVVITPGEPAGIGPDLVVQLAQREWPVELVVCADATLLTDRAAMLGLPLTLRPYSPNSPAQPQTTGTLTLLPVALRESVTAGQLAIENGHYVVETLARACDGCLNGEFAALITGPVHKGVINDAGIPFTGHTEFFEERSQAKKVVMMLATEELRVALATTHLPLRDIADAITPALLHEVIAILHHDLRTKFGIAEPRILVCGLNPHAGEGGHMGTEEIDTIIPVLDELRAQGMKLNGPLPADTLFQPKYLDNADAVLAMYHDQGLPVLKYQGFGRGVNITLGLPFIRTSVDHGTALELAGRGEADVGSFITALNLAIKMIVNTQ</sequence>
<keyword id="KW-0170">Cobalt</keyword>
<keyword id="KW-0963">Cytoplasm</keyword>
<keyword id="KW-0460">Magnesium</keyword>
<keyword id="KW-0479">Metal-binding</keyword>
<keyword id="KW-0520">NAD</keyword>
<keyword id="KW-0521">NADP</keyword>
<keyword id="KW-0560">Oxidoreductase</keyword>
<keyword id="KW-0664">Pyridoxine biosynthesis</keyword>
<keyword id="KW-0862">Zinc</keyword>
<gene>
    <name evidence="1" type="primary">pdxA</name>
    <name type="ordered locus">ECIAI1_0054</name>
</gene>
<feature type="chain" id="PRO_1000128243" description="4-hydroxythreonine-4-phosphate dehydrogenase">
    <location>
        <begin position="1"/>
        <end position="329"/>
    </location>
</feature>
<feature type="binding site" evidence="1">
    <location>
        <position position="136"/>
    </location>
    <ligand>
        <name>substrate</name>
    </ligand>
</feature>
<feature type="binding site" evidence="1">
    <location>
        <position position="137"/>
    </location>
    <ligand>
        <name>substrate</name>
    </ligand>
</feature>
<feature type="binding site" evidence="1">
    <location>
        <position position="166"/>
    </location>
    <ligand>
        <name>a divalent metal cation</name>
        <dbReference type="ChEBI" id="CHEBI:60240"/>
        <note>ligand shared between dimeric partners</note>
    </ligand>
</feature>
<feature type="binding site" evidence="1">
    <location>
        <position position="211"/>
    </location>
    <ligand>
        <name>a divalent metal cation</name>
        <dbReference type="ChEBI" id="CHEBI:60240"/>
        <note>ligand shared between dimeric partners</note>
    </ligand>
</feature>
<feature type="binding site" evidence="1">
    <location>
        <position position="266"/>
    </location>
    <ligand>
        <name>a divalent metal cation</name>
        <dbReference type="ChEBI" id="CHEBI:60240"/>
        <note>ligand shared between dimeric partners</note>
    </ligand>
</feature>
<feature type="binding site" evidence="1">
    <location>
        <position position="274"/>
    </location>
    <ligand>
        <name>substrate</name>
    </ligand>
</feature>
<feature type="binding site" evidence="1">
    <location>
        <position position="283"/>
    </location>
    <ligand>
        <name>substrate</name>
    </ligand>
</feature>
<feature type="binding site" evidence="1">
    <location>
        <position position="292"/>
    </location>
    <ligand>
        <name>substrate</name>
    </ligand>
</feature>
<evidence type="ECO:0000255" key="1">
    <source>
        <dbReference type="HAMAP-Rule" id="MF_00536"/>
    </source>
</evidence>
<proteinExistence type="inferred from homology"/>
<accession>B7M0E9</accession>
<name>PDXA_ECO8A</name>
<protein>
    <recommendedName>
        <fullName evidence="1">4-hydroxythreonine-4-phosphate dehydrogenase</fullName>
        <ecNumber evidence="1">1.1.1.262</ecNumber>
    </recommendedName>
    <alternativeName>
        <fullName evidence="1">4-(phosphohydroxy)-L-threonine dehydrogenase</fullName>
    </alternativeName>
</protein>
<dbReference type="EC" id="1.1.1.262" evidence="1"/>
<dbReference type="EMBL" id="CU928160">
    <property type="protein sequence ID" value="CAQ96944.1"/>
    <property type="molecule type" value="Genomic_DNA"/>
</dbReference>
<dbReference type="RefSeq" id="WP_000241259.1">
    <property type="nucleotide sequence ID" value="NC_011741.1"/>
</dbReference>
<dbReference type="SMR" id="B7M0E9"/>
<dbReference type="KEGG" id="ecr:ECIAI1_0054"/>
<dbReference type="HOGENOM" id="CLU_040168_1_0_6"/>
<dbReference type="UniPathway" id="UPA00244">
    <property type="reaction ID" value="UER00312"/>
</dbReference>
<dbReference type="GO" id="GO:0005737">
    <property type="term" value="C:cytoplasm"/>
    <property type="evidence" value="ECO:0007669"/>
    <property type="project" value="UniProtKB-SubCell"/>
</dbReference>
<dbReference type="GO" id="GO:0050570">
    <property type="term" value="F:4-hydroxythreonine-4-phosphate dehydrogenase activity"/>
    <property type="evidence" value="ECO:0007669"/>
    <property type="project" value="UniProtKB-UniRule"/>
</dbReference>
<dbReference type="GO" id="GO:0050897">
    <property type="term" value="F:cobalt ion binding"/>
    <property type="evidence" value="ECO:0007669"/>
    <property type="project" value="UniProtKB-UniRule"/>
</dbReference>
<dbReference type="GO" id="GO:0000287">
    <property type="term" value="F:magnesium ion binding"/>
    <property type="evidence" value="ECO:0007669"/>
    <property type="project" value="UniProtKB-UniRule"/>
</dbReference>
<dbReference type="GO" id="GO:0051287">
    <property type="term" value="F:NAD binding"/>
    <property type="evidence" value="ECO:0007669"/>
    <property type="project" value="InterPro"/>
</dbReference>
<dbReference type="GO" id="GO:0008270">
    <property type="term" value="F:zinc ion binding"/>
    <property type="evidence" value="ECO:0007669"/>
    <property type="project" value="UniProtKB-UniRule"/>
</dbReference>
<dbReference type="GO" id="GO:0042823">
    <property type="term" value="P:pyridoxal phosphate biosynthetic process"/>
    <property type="evidence" value="ECO:0007669"/>
    <property type="project" value="UniProtKB-UniRule"/>
</dbReference>
<dbReference type="GO" id="GO:0008615">
    <property type="term" value="P:pyridoxine biosynthetic process"/>
    <property type="evidence" value="ECO:0007669"/>
    <property type="project" value="UniProtKB-UniRule"/>
</dbReference>
<dbReference type="FunFam" id="3.40.718.10:FF:000010">
    <property type="entry name" value="4-hydroxythreonine-4-phosphate dehydrogenase"/>
    <property type="match status" value="1"/>
</dbReference>
<dbReference type="Gene3D" id="3.40.718.10">
    <property type="entry name" value="Isopropylmalate Dehydrogenase"/>
    <property type="match status" value="1"/>
</dbReference>
<dbReference type="HAMAP" id="MF_00536">
    <property type="entry name" value="PdxA"/>
    <property type="match status" value="1"/>
</dbReference>
<dbReference type="InterPro" id="IPR037510">
    <property type="entry name" value="PdxA"/>
</dbReference>
<dbReference type="InterPro" id="IPR005255">
    <property type="entry name" value="PdxA_fam"/>
</dbReference>
<dbReference type="NCBIfam" id="TIGR00557">
    <property type="entry name" value="pdxA"/>
    <property type="match status" value="1"/>
</dbReference>
<dbReference type="PANTHER" id="PTHR30004">
    <property type="entry name" value="4-HYDROXYTHREONINE-4-PHOSPHATE DEHYDROGENASE"/>
    <property type="match status" value="1"/>
</dbReference>
<dbReference type="PANTHER" id="PTHR30004:SF5">
    <property type="entry name" value="4-HYDROXYTHREONINE-4-PHOSPHATE DEHYDROGENASE"/>
    <property type="match status" value="1"/>
</dbReference>
<dbReference type="Pfam" id="PF04166">
    <property type="entry name" value="PdxA"/>
    <property type="match status" value="1"/>
</dbReference>
<dbReference type="SUPFAM" id="SSF53659">
    <property type="entry name" value="Isocitrate/Isopropylmalate dehydrogenase-like"/>
    <property type="match status" value="1"/>
</dbReference>